<comment type="catalytic activity">
    <reaction evidence="1">
        <text>(2R)-3-phosphoglycerate + ATP = (2R)-3-phospho-glyceroyl phosphate + ADP</text>
        <dbReference type="Rhea" id="RHEA:14801"/>
        <dbReference type="ChEBI" id="CHEBI:30616"/>
        <dbReference type="ChEBI" id="CHEBI:57604"/>
        <dbReference type="ChEBI" id="CHEBI:58272"/>
        <dbReference type="ChEBI" id="CHEBI:456216"/>
        <dbReference type="EC" id="2.7.2.3"/>
    </reaction>
</comment>
<comment type="pathway">
    <text evidence="1">Carbohydrate degradation; glycolysis; pyruvate from D-glyceraldehyde 3-phosphate: step 2/5.</text>
</comment>
<comment type="subunit">
    <text evidence="1">Monomer.</text>
</comment>
<comment type="subcellular location">
    <subcellularLocation>
        <location evidence="1">Cytoplasm</location>
    </subcellularLocation>
</comment>
<comment type="similarity">
    <text evidence="1">Belongs to the phosphoglycerate kinase family.</text>
</comment>
<protein>
    <recommendedName>
        <fullName evidence="1">Phosphoglycerate kinase</fullName>
        <ecNumber evidence="1">2.7.2.3</ecNumber>
    </recommendedName>
</protein>
<sequence>MSVINLSDLDLNSKRVLIRQDLNVPISNGVVTSDKRIKASLPTIKMALNQGAKVMLMSHRGRPIEGDPSDGFSLQPVADRLSELLNTTVRLEKDWLDGVEMNNGKVVLCENVRFNVGEMVNDDELSKRMAAICDIFVMDAFGTAHRAQASTYGVAKYAPIACSGPLLSEELDALGKALDNPKRPMVAIVGGSKVSTKLTVLESLSKIVDQLVVGGGIANTFIAAQGFNVGKSLCEYDLIPIAKKLMEDCEIPVSKDVVCGKEFSDVAEAETKASKDVADDDMIFDIGPKSAQQLADIMRNAGTIVWNGPVGVFEFDQFAGGTETLGKAIAESNAFSIAGGGDTLAAVDKYGIEDKISYISTGGGAFLEFLEGKKLPAVEVLEQRALEVIKLA</sequence>
<name>PGK_VESOH</name>
<gene>
    <name evidence="1" type="primary">pgk</name>
    <name type="ordered locus">COSY_0072</name>
</gene>
<feature type="chain" id="PRO_1000058089" description="Phosphoglycerate kinase">
    <location>
        <begin position="1"/>
        <end position="392"/>
    </location>
</feature>
<feature type="binding site" evidence="1">
    <location>
        <begin position="21"/>
        <end position="23"/>
    </location>
    <ligand>
        <name>substrate</name>
    </ligand>
</feature>
<feature type="binding site" evidence="1">
    <location>
        <position position="36"/>
    </location>
    <ligand>
        <name>substrate</name>
    </ligand>
</feature>
<feature type="binding site" evidence="1">
    <location>
        <begin position="59"/>
        <end position="62"/>
    </location>
    <ligand>
        <name>substrate</name>
    </ligand>
</feature>
<feature type="binding site" evidence="1">
    <location>
        <position position="113"/>
    </location>
    <ligand>
        <name>substrate</name>
    </ligand>
</feature>
<feature type="binding site" evidence="1">
    <location>
        <position position="146"/>
    </location>
    <ligand>
        <name>substrate</name>
    </ligand>
</feature>
<feature type="binding site" evidence="1">
    <location>
        <position position="197"/>
    </location>
    <ligand>
        <name>ATP</name>
        <dbReference type="ChEBI" id="CHEBI:30616"/>
    </ligand>
</feature>
<feature type="binding site" evidence="1">
    <location>
        <position position="314"/>
    </location>
    <ligand>
        <name>ATP</name>
        <dbReference type="ChEBI" id="CHEBI:30616"/>
    </ligand>
</feature>
<feature type="binding site" evidence="1">
    <location>
        <begin position="340"/>
        <end position="343"/>
    </location>
    <ligand>
        <name>ATP</name>
        <dbReference type="ChEBI" id="CHEBI:30616"/>
    </ligand>
</feature>
<accession>A5CXU9</accession>
<reference key="1">
    <citation type="journal article" date="2007" name="Curr. Biol.">
        <title>Reduced genome of the thioautotrophic intracellular symbiont in a deep-sea clam, Calyptogena okutanii.</title>
        <authorList>
            <person name="Kuwahara H."/>
            <person name="Yoshida T."/>
            <person name="Takaki Y."/>
            <person name="Shimamura S."/>
            <person name="Nishi S."/>
            <person name="Harada M."/>
            <person name="Matsuyama K."/>
            <person name="Takishita K."/>
            <person name="Kawato M."/>
            <person name="Uematsu K."/>
            <person name="Fujiwara Y."/>
            <person name="Sato T."/>
            <person name="Kato C."/>
            <person name="Kitagawa M."/>
            <person name="Kato I."/>
            <person name="Maruyama T."/>
        </authorList>
    </citation>
    <scope>NUCLEOTIDE SEQUENCE [LARGE SCALE GENOMIC DNA]</scope>
    <source>
        <strain>HA</strain>
    </source>
</reference>
<proteinExistence type="inferred from homology"/>
<evidence type="ECO:0000255" key="1">
    <source>
        <dbReference type="HAMAP-Rule" id="MF_00145"/>
    </source>
</evidence>
<organism>
    <name type="scientific">Vesicomyosocius okutanii subsp. Calyptogena okutanii (strain HA)</name>
    <dbReference type="NCBI Taxonomy" id="412965"/>
    <lineage>
        <taxon>Bacteria</taxon>
        <taxon>Pseudomonadati</taxon>
        <taxon>Pseudomonadota</taxon>
        <taxon>Gammaproteobacteria</taxon>
        <taxon>Candidatus Pseudothioglobaceae</taxon>
        <taxon>Candidatus Vesicomyosocius</taxon>
    </lineage>
</organism>
<dbReference type="EC" id="2.7.2.3" evidence="1"/>
<dbReference type="EMBL" id="AP009247">
    <property type="protein sequence ID" value="BAF61208.1"/>
    <property type="molecule type" value="Genomic_DNA"/>
</dbReference>
<dbReference type="RefSeq" id="WP_011929478.1">
    <property type="nucleotide sequence ID" value="NC_009465.1"/>
</dbReference>
<dbReference type="SMR" id="A5CXU9"/>
<dbReference type="STRING" id="412965.COSY_0072"/>
<dbReference type="KEGG" id="vok:COSY_0072"/>
<dbReference type="eggNOG" id="COG0126">
    <property type="taxonomic scope" value="Bacteria"/>
</dbReference>
<dbReference type="HOGENOM" id="CLU_025427_0_2_6"/>
<dbReference type="OrthoDB" id="9808460at2"/>
<dbReference type="UniPathway" id="UPA00109">
    <property type="reaction ID" value="UER00185"/>
</dbReference>
<dbReference type="Proteomes" id="UP000000247">
    <property type="component" value="Chromosome"/>
</dbReference>
<dbReference type="GO" id="GO:0005829">
    <property type="term" value="C:cytosol"/>
    <property type="evidence" value="ECO:0007669"/>
    <property type="project" value="TreeGrafter"/>
</dbReference>
<dbReference type="GO" id="GO:0043531">
    <property type="term" value="F:ADP binding"/>
    <property type="evidence" value="ECO:0007669"/>
    <property type="project" value="TreeGrafter"/>
</dbReference>
<dbReference type="GO" id="GO:0005524">
    <property type="term" value="F:ATP binding"/>
    <property type="evidence" value="ECO:0007669"/>
    <property type="project" value="UniProtKB-KW"/>
</dbReference>
<dbReference type="GO" id="GO:0004618">
    <property type="term" value="F:phosphoglycerate kinase activity"/>
    <property type="evidence" value="ECO:0007669"/>
    <property type="project" value="UniProtKB-UniRule"/>
</dbReference>
<dbReference type="GO" id="GO:0006094">
    <property type="term" value="P:gluconeogenesis"/>
    <property type="evidence" value="ECO:0007669"/>
    <property type="project" value="TreeGrafter"/>
</dbReference>
<dbReference type="GO" id="GO:0006096">
    <property type="term" value="P:glycolytic process"/>
    <property type="evidence" value="ECO:0007669"/>
    <property type="project" value="UniProtKB-UniRule"/>
</dbReference>
<dbReference type="FunFam" id="3.40.50.1260:FF:000001">
    <property type="entry name" value="Phosphoglycerate kinase"/>
    <property type="match status" value="1"/>
</dbReference>
<dbReference type="FunFam" id="3.40.50.1260:FF:000002">
    <property type="entry name" value="Phosphoglycerate kinase"/>
    <property type="match status" value="1"/>
</dbReference>
<dbReference type="Gene3D" id="3.40.50.1260">
    <property type="entry name" value="Phosphoglycerate kinase, N-terminal domain"/>
    <property type="match status" value="2"/>
</dbReference>
<dbReference type="HAMAP" id="MF_00145">
    <property type="entry name" value="Phosphoglyc_kinase"/>
    <property type="match status" value="1"/>
</dbReference>
<dbReference type="InterPro" id="IPR001576">
    <property type="entry name" value="Phosphoglycerate_kinase"/>
</dbReference>
<dbReference type="InterPro" id="IPR015911">
    <property type="entry name" value="Phosphoglycerate_kinase_CS"/>
</dbReference>
<dbReference type="InterPro" id="IPR015824">
    <property type="entry name" value="Phosphoglycerate_kinase_N"/>
</dbReference>
<dbReference type="InterPro" id="IPR036043">
    <property type="entry name" value="Phosphoglycerate_kinase_sf"/>
</dbReference>
<dbReference type="PANTHER" id="PTHR11406">
    <property type="entry name" value="PHOSPHOGLYCERATE KINASE"/>
    <property type="match status" value="1"/>
</dbReference>
<dbReference type="PANTHER" id="PTHR11406:SF23">
    <property type="entry name" value="PHOSPHOGLYCERATE KINASE 1, CHLOROPLASTIC-RELATED"/>
    <property type="match status" value="1"/>
</dbReference>
<dbReference type="Pfam" id="PF00162">
    <property type="entry name" value="PGK"/>
    <property type="match status" value="1"/>
</dbReference>
<dbReference type="PIRSF" id="PIRSF000724">
    <property type="entry name" value="Pgk"/>
    <property type="match status" value="1"/>
</dbReference>
<dbReference type="PRINTS" id="PR00477">
    <property type="entry name" value="PHGLYCKINASE"/>
</dbReference>
<dbReference type="SUPFAM" id="SSF53748">
    <property type="entry name" value="Phosphoglycerate kinase"/>
    <property type="match status" value="1"/>
</dbReference>
<dbReference type="PROSITE" id="PS00111">
    <property type="entry name" value="PGLYCERATE_KINASE"/>
    <property type="match status" value="1"/>
</dbReference>
<keyword id="KW-0067">ATP-binding</keyword>
<keyword id="KW-0963">Cytoplasm</keyword>
<keyword id="KW-0324">Glycolysis</keyword>
<keyword id="KW-0418">Kinase</keyword>
<keyword id="KW-0547">Nucleotide-binding</keyword>
<keyword id="KW-1185">Reference proteome</keyword>
<keyword id="KW-0808">Transferase</keyword>